<protein>
    <recommendedName>
        <fullName>Na(+)/H(+) antiporter NhaS2</fullName>
    </recommendedName>
    <alternativeName>
        <fullName>Sodium/proton antiporter NhaS2</fullName>
    </alternativeName>
</protein>
<feature type="chain" id="PRO_0000423928" description="Na(+)/H(+) antiporter NhaS2">
    <location>
        <begin position="1"/>
        <end position="540"/>
    </location>
</feature>
<feature type="transmembrane region" description="Helical" evidence="1">
    <location>
        <begin position="29"/>
        <end position="49"/>
    </location>
</feature>
<feature type="transmembrane region" description="Helical" evidence="1">
    <location>
        <begin position="71"/>
        <end position="91"/>
    </location>
</feature>
<feature type="transmembrane region" description="Helical" evidence="1">
    <location>
        <begin position="117"/>
        <end position="137"/>
    </location>
</feature>
<feature type="transmembrane region" description="Helical" evidence="1">
    <location>
        <begin position="138"/>
        <end position="158"/>
    </location>
</feature>
<feature type="transmembrane region" description="Helical" evidence="1">
    <location>
        <begin position="207"/>
        <end position="227"/>
    </location>
</feature>
<feature type="transmembrane region" description="Helical" evidence="1">
    <location>
        <begin position="256"/>
        <end position="276"/>
    </location>
</feature>
<feature type="transmembrane region" description="Helical" evidence="1">
    <location>
        <begin position="296"/>
        <end position="316"/>
    </location>
</feature>
<feature type="transmembrane region" description="Helical" evidence="1">
    <location>
        <begin position="323"/>
        <end position="343"/>
    </location>
</feature>
<feature type="transmembrane region" description="Helical" evidence="1">
    <location>
        <begin position="358"/>
        <end position="378"/>
    </location>
</feature>
<feature type="transmembrane region" description="Helical" evidence="1">
    <location>
        <begin position="389"/>
        <end position="409"/>
    </location>
</feature>
<sequence>MIKLPVLLADINIQSLPTEPELILNNLAITTLVENLIILLLVATLVALVARWLKIPYVIGLVLAGLAIPRGLSVGLNPELILNFFLPILIFEAAINTDISRLRSTIKPITVLAGPGVVISAAITAVLLKIGLGLAWVTAAGVSVILTITDTVSVIAAFRSVPVPRRLATIVEGESMLNDGVAMVLLSVITTIHIQGGFSAGEGIRQIFVAFVGGGLVGLGLGYLCVGLFRQLNDDLSDILLTVSVSLGTFQIGQMLGVSSAIAVVVAGLVIGNLALKQTSASIKVTLLSFWEYAGFGVNTLIFLLVGIEVYPSILLSTIPAALIAIVAYQIGRVFSIYPLLYLLSFFDRPLPLRWQHVLIAGNVKGSLSMALALALPLTLPGRDQVVTLVFSTVMVSLIGQGLSLPWVVKKLQLSKPSPLAQKIAMLQLNLVTAKAAQGELKYLLEAGSLPKFLYEELFADYQARIANSEQELREFYNQRNLIFSEGEVEKKYIDGLYRRLYIAEKSAINDALAKGILADDISDEYLQVLNEKLLALQDD</sequence>
<gene>
    <name type="primary">nhaS2</name>
    <name type="ordered locus">sll0273</name>
</gene>
<proteinExistence type="evidence at protein level"/>
<organism>
    <name type="scientific">Synechocystis sp. (strain ATCC 27184 / PCC 6803 / Kazusa)</name>
    <dbReference type="NCBI Taxonomy" id="1111708"/>
    <lineage>
        <taxon>Bacteria</taxon>
        <taxon>Bacillati</taxon>
        <taxon>Cyanobacteriota</taxon>
        <taxon>Cyanophyceae</taxon>
        <taxon>Synechococcales</taxon>
        <taxon>Merismopediaceae</taxon>
        <taxon>Synechocystis</taxon>
    </lineage>
</organism>
<dbReference type="EMBL" id="BA000022">
    <property type="protein sequence ID" value="BAA18490.1"/>
    <property type="molecule type" value="Genomic_DNA"/>
</dbReference>
<dbReference type="PIR" id="S76231">
    <property type="entry name" value="S76231"/>
</dbReference>
<dbReference type="SMR" id="P74393"/>
<dbReference type="FunCoup" id="P74393">
    <property type="interactions" value="38"/>
</dbReference>
<dbReference type="IntAct" id="P74393">
    <property type="interactions" value="1"/>
</dbReference>
<dbReference type="STRING" id="1148.gene:10499371"/>
<dbReference type="PaxDb" id="1148-1653577"/>
<dbReference type="EnsemblBacteria" id="BAA18490">
    <property type="protein sequence ID" value="BAA18490"/>
    <property type="gene ID" value="BAA18490"/>
</dbReference>
<dbReference type="KEGG" id="syn:sll0273"/>
<dbReference type="eggNOG" id="COG0025">
    <property type="taxonomic scope" value="Bacteria"/>
</dbReference>
<dbReference type="InParanoid" id="P74393"/>
<dbReference type="PhylomeDB" id="P74393"/>
<dbReference type="Proteomes" id="UP000001425">
    <property type="component" value="Chromosome"/>
</dbReference>
<dbReference type="GO" id="GO:0005886">
    <property type="term" value="C:plasma membrane"/>
    <property type="evidence" value="ECO:0000318"/>
    <property type="project" value="GO_Central"/>
</dbReference>
<dbReference type="GO" id="GO:0015386">
    <property type="term" value="F:potassium:proton antiporter activity"/>
    <property type="evidence" value="ECO:0000318"/>
    <property type="project" value="GO_Central"/>
</dbReference>
<dbReference type="GO" id="GO:0015385">
    <property type="term" value="F:sodium:proton antiporter activity"/>
    <property type="evidence" value="ECO:0000318"/>
    <property type="project" value="GO_Central"/>
</dbReference>
<dbReference type="GO" id="GO:0071805">
    <property type="term" value="P:potassium ion transmembrane transport"/>
    <property type="evidence" value="ECO:0000318"/>
    <property type="project" value="GO_Central"/>
</dbReference>
<dbReference type="GO" id="GO:0051453">
    <property type="term" value="P:regulation of intracellular pH"/>
    <property type="evidence" value="ECO:0000318"/>
    <property type="project" value="GO_Central"/>
</dbReference>
<dbReference type="GO" id="GO:0098719">
    <property type="term" value="P:sodium ion import across plasma membrane"/>
    <property type="evidence" value="ECO:0000318"/>
    <property type="project" value="GO_Central"/>
</dbReference>
<dbReference type="Gene3D" id="1.20.1530.20">
    <property type="match status" value="1"/>
</dbReference>
<dbReference type="InterPro" id="IPR018422">
    <property type="entry name" value="Cation/H_exchanger_CPA1"/>
</dbReference>
<dbReference type="InterPro" id="IPR006153">
    <property type="entry name" value="Cation/H_exchanger_TM"/>
</dbReference>
<dbReference type="InterPro" id="IPR038770">
    <property type="entry name" value="Na+/solute_symporter_sf"/>
</dbReference>
<dbReference type="PANTHER" id="PTHR10110:SF195">
    <property type="entry name" value="NA(+)_H(+) ANTIPORTER NHAS2"/>
    <property type="match status" value="1"/>
</dbReference>
<dbReference type="PANTHER" id="PTHR10110">
    <property type="entry name" value="SODIUM/HYDROGEN EXCHANGER"/>
    <property type="match status" value="1"/>
</dbReference>
<dbReference type="Pfam" id="PF00999">
    <property type="entry name" value="Na_H_Exchanger"/>
    <property type="match status" value="1"/>
</dbReference>
<keyword id="KW-0050">Antiport</keyword>
<keyword id="KW-1003">Cell membrane</keyword>
<keyword id="KW-0406">Ion transport</keyword>
<keyword id="KW-0472">Membrane</keyword>
<keyword id="KW-1185">Reference proteome</keyword>
<keyword id="KW-0915">Sodium</keyword>
<keyword id="KW-0739">Sodium transport</keyword>
<keyword id="KW-0812">Transmembrane</keyword>
<keyword id="KW-1133">Transmembrane helix</keyword>
<keyword id="KW-0813">Transport</keyword>
<comment type="function">
    <text evidence="2">Required for Na(+) uptake into the cell, especially at low external Na(+) concentrations or low Na(+)/K(+) ratios. May be part of a sodium cycle that permits re-entry of sodium into the cell.</text>
</comment>
<comment type="subcellular location">
    <subcellularLocation>
        <location evidence="3">Cell membrane</location>
        <topology evidence="3">Multi-pass membrane protein</topology>
    </subcellularLocation>
</comment>
<comment type="disruption phenotype">
    <text evidence="2">Mutant cannot grow at low sodium concentrations and exhibits an increased sensitivity towards potassium.</text>
</comment>
<comment type="similarity">
    <text evidence="3">Belongs to the monovalent cation:proton antiporter 1 (CPA1) transporter (TC 2.A.36) family.</text>
</comment>
<name>NHAS2_SYNY3</name>
<evidence type="ECO:0000255" key="1"/>
<evidence type="ECO:0000269" key="2">
    <source ref="2"/>
</evidence>
<evidence type="ECO:0000305" key="3"/>
<accession>P74393</accession>
<reference key="1">
    <citation type="journal article" date="1996" name="DNA Res.">
        <title>Sequence analysis of the genome of the unicellular cyanobacterium Synechocystis sp. strain PCC6803. II. Sequence determination of the entire genome and assignment of potential protein-coding regions.</title>
        <authorList>
            <person name="Kaneko T."/>
            <person name="Sato S."/>
            <person name="Kotani H."/>
            <person name="Tanaka A."/>
            <person name="Asamizu E."/>
            <person name="Nakamura Y."/>
            <person name="Miyajima N."/>
            <person name="Hirosawa M."/>
            <person name="Sugiura M."/>
            <person name="Sasamoto S."/>
            <person name="Kimura T."/>
            <person name="Hosouchi T."/>
            <person name="Matsuno A."/>
            <person name="Muraki A."/>
            <person name="Nakazaki N."/>
            <person name="Naruo K."/>
            <person name="Okumura S."/>
            <person name="Shimpo S."/>
            <person name="Takeuchi C."/>
            <person name="Wada T."/>
            <person name="Watanabe A."/>
            <person name="Yamada M."/>
            <person name="Yasuda M."/>
            <person name="Tabata S."/>
        </authorList>
    </citation>
    <scope>NUCLEOTIDE SEQUENCE [LARGE SCALE GENOMIC DNA]</scope>
    <source>
        <strain>ATCC 27184 / PCC 6803 / Kazusa</strain>
    </source>
</reference>
<reference key="2">
    <citation type="journal article" date="2000" name="Plant Cell Environ.">
        <title>The gene sll0273 of the cyanobacterium Synechocystis sp. strain PCC6803 encodes a protein essential for growth at low Na+/K+ ratios.</title>
        <authorList>
            <person name="Mikkat S."/>
            <person name="Milkowski C."/>
            <person name="Hagemann M."/>
        </authorList>
    </citation>
    <scope>FUNCTION IN SODIUM UPTAKE</scope>
    <scope>DISRUPTION PHENOTYPE</scope>
    <source>
        <strain>ATCC 27184 / PCC 6803 / N-1</strain>
    </source>
</reference>
<reference key="3">
    <citation type="journal article" date="2001" name="J. Bacteriol.">
        <title>Functional expression in Escherichia coli of low-affinity and high-affinity Na(+)(Li(+))/H(+) antiporters of Synechocystis.</title>
        <authorList>
            <person name="Inaba M."/>
            <person name="Sakamoto A."/>
            <person name="Murata N."/>
        </authorList>
    </citation>
    <scope>GENE NAME</scope>
    <source>
        <strain>ATCC 27184 / PCC 6803 / N-1</strain>
    </source>
</reference>